<gene>
    <name evidence="1" type="primary">xseB</name>
    <name type="ordered locus">Pput_0563</name>
</gene>
<name>EX7S_PSEP1</name>
<accession>A5VXX1</accession>
<keyword id="KW-0963">Cytoplasm</keyword>
<keyword id="KW-0269">Exonuclease</keyword>
<keyword id="KW-0378">Hydrolase</keyword>
<keyword id="KW-0540">Nuclease</keyword>
<reference key="1">
    <citation type="submission" date="2007-05" db="EMBL/GenBank/DDBJ databases">
        <title>Complete sequence of Pseudomonas putida F1.</title>
        <authorList>
            <consortium name="US DOE Joint Genome Institute"/>
            <person name="Copeland A."/>
            <person name="Lucas S."/>
            <person name="Lapidus A."/>
            <person name="Barry K."/>
            <person name="Detter J.C."/>
            <person name="Glavina del Rio T."/>
            <person name="Hammon N."/>
            <person name="Israni S."/>
            <person name="Dalin E."/>
            <person name="Tice H."/>
            <person name="Pitluck S."/>
            <person name="Chain P."/>
            <person name="Malfatti S."/>
            <person name="Shin M."/>
            <person name="Vergez L."/>
            <person name="Schmutz J."/>
            <person name="Larimer F."/>
            <person name="Land M."/>
            <person name="Hauser L."/>
            <person name="Kyrpides N."/>
            <person name="Lykidis A."/>
            <person name="Parales R."/>
            <person name="Richardson P."/>
        </authorList>
    </citation>
    <scope>NUCLEOTIDE SEQUENCE [LARGE SCALE GENOMIC DNA]</scope>
    <source>
        <strain>ATCC 700007 / DSM 6899 / JCM 31910 / BCRC 17059 / LMG 24140 / F1</strain>
    </source>
</reference>
<evidence type="ECO:0000255" key="1">
    <source>
        <dbReference type="HAMAP-Rule" id="MF_00337"/>
    </source>
</evidence>
<proteinExistence type="inferred from homology"/>
<comment type="function">
    <text evidence="1">Bidirectionally degrades single-stranded DNA into large acid-insoluble oligonucleotides, which are then degraded further into small acid-soluble oligonucleotides.</text>
</comment>
<comment type="catalytic activity">
    <reaction evidence="1">
        <text>Exonucleolytic cleavage in either 5'- to 3'- or 3'- to 5'-direction to yield nucleoside 5'-phosphates.</text>
        <dbReference type="EC" id="3.1.11.6"/>
    </reaction>
</comment>
<comment type="subunit">
    <text evidence="1">Heterooligomer composed of large and small subunits.</text>
</comment>
<comment type="subcellular location">
    <subcellularLocation>
        <location evidence="1">Cytoplasm</location>
    </subcellularLocation>
</comment>
<comment type="similarity">
    <text evidence="1">Belongs to the XseB family.</text>
</comment>
<feature type="chain" id="PRO_1000019587" description="Exodeoxyribonuclease 7 small subunit">
    <location>
        <begin position="1"/>
        <end position="80"/>
    </location>
</feature>
<dbReference type="EC" id="3.1.11.6" evidence="1"/>
<dbReference type="EMBL" id="CP000712">
    <property type="protein sequence ID" value="ABQ76731.1"/>
    <property type="molecule type" value="Genomic_DNA"/>
</dbReference>
<dbReference type="SMR" id="A5VXX1"/>
<dbReference type="KEGG" id="ppf:Pput_0563"/>
<dbReference type="eggNOG" id="COG1722">
    <property type="taxonomic scope" value="Bacteria"/>
</dbReference>
<dbReference type="HOGENOM" id="CLU_145918_3_3_6"/>
<dbReference type="GO" id="GO:0005829">
    <property type="term" value="C:cytosol"/>
    <property type="evidence" value="ECO:0007669"/>
    <property type="project" value="TreeGrafter"/>
</dbReference>
<dbReference type="GO" id="GO:0009318">
    <property type="term" value="C:exodeoxyribonuclease VII complex"/>
    <property type="evidence" value="ECO:0007669"/>
    <property type="project" value="InterPro"/>
</dbReference>
<dbReference type="GO" id="GO:0008855">
    <property type="term" value="F:exodeoxyribonuclease VII activity"/>
    <property type="evidence" value="ECO:0007669"/>
    <property type="project" value="UniProtKB-UniRule"/>
</dbReference>
<dbReference type="GO" id="GO:0006308">
    <property type="term" value="P:DNA catabolic process"/>
    <property type="evidence" value="ECO:0007669"/>
    <property type="project" value="UniProtKB-UniRule"/>
</dbReference>
<dbReference type="Gene3D" id="1.10.287.1040">
    <property type="entry name" value="Exonuclease VII, small subunit"/>
    <property type="match status" value="1"/>
</dbReference>
<dbReference type="HAMAP" id="MF_00337">
    <property type="entry name" value="Exonuc_7_S"/>
    <property type="match status" value="1"/>
</dbReference>
<dbReference type="InterPro" id="IPR003761">
    <property type="entry name" value="Exonuc_VII_S"/>
</dbReference>
<dbReference type="InterPro" id="IPR037004">
    <property type="entry name" value="Exonuc_VII_ssu_sf"/>
</dbReference>
<dbReference type="NCBIfam" id="NF002140">
    <property type="entry name" value="PRK00977.1-4"/>
    <property type="match status" value="1"/>
</dbReference>
<dbReference type="NCBIfam" id="TIGR01280">
    <property type="entry name" value="xseB"/>
    <property type="match status" value="1"/>
</dbReference>
<dbReference type="PANTHER" id="PTHR34137">
    <property type="entry name" value="EXODEOXYRIBONUCLEASE 7 SMALL SUBUNIT"/>
    <property type="match status" value="1"/>
</dbReference>
<dbReference type="PANTHER" id="PTHR34137:SF1">
    <property type="entry name" value="EXODEOXYRIBONUCLEASE 7 SMALL SUBUNIT"/>
    <property type="match status" value="1"/>
</dbReference>
<dbReference type="Pfam" id="PF02609">
    <property type="entry name" value="Exonuc_VII_S"/>
    <property type="match status" value="1"/>
</dbReference>
<dbReference type="PIRSF" id="PIRSF006488">
    <property type="entry name" value="Exonuc_VII_S"/>
    <property type="match status" value="1"/>
</dbReference>
<dbReference type="SUPFAM" id="SSF116842">
    <property type="entry name" value="XseB-like"/>
    <property type="match status" value="1"/>
</dbReference>
<sequence>MARKKASLDFEQSLADLQALVERLENGELSLEESLAAFEQGIALTRDCQGALAQAEQKVQILLERDGELAAQPFDAEPEA</sequence>
<protein>
    <recommendedName>
        <fullName evidence="1">Exodeoxyribonuclease 7 small subunit</fullName>
        <ecNumber evidence="1">3.1.11.6</ecNumber>
    </recommendedName>
    <alternativeName>
        <fullName evidence="1">Exodeoxyribonuclease VII small subunit</fullName>
        <shortName evidence="1">Exonuclease VII small subunit</shortName>
    </alternativeName>
</protein>
<organism>
    <name type="scientific">Pseudomonas putida (strain ATCC 700007 / DSM 6899 / JCM 31910 / BCRC 17059 / LMG 24140 / F1)</name>
    <dbReference type="NCBI Taxonomy" id="351746"/>
    <lineage>
        <taxon>Bacteria</taxon>
        <taxon>Pseudomonadati</taxon>
        <taxon>Pseudomonadota</taxon>
        <taxon>Gammaproteobacteria</taxon>
        <taxon>Pseudomonadales</taxon>
        <taxon>Pseudomonadaceae</taxon>
        <taxon>Pseudomonas</taxon>
    </lineage>
</organism>